<accession>B8E160</accession>
<organism>
    <name type="scientific">Dictyoglomus turgidum (strain DSM 6724 / Z-1310)</name>
    <dbReference type="NCBI Taxonomy" id="515635"/>
    <lineage>
        <taxon>Bacteria</taxon>
        <taxon>Pseudomonadati</taxon>
        <taxon>Dictyoglomota</taxon>
        <taxon>Dictyoglomia</taxon>
        <taxon>Dictyoglomales</taxon>
        <taxon>Dictyoglomaceae</taxon>
        <taxon>Dictyoglomus</taxon>
    </lineage>
</organism>
<name>HTPX_DICTD</name>
<gene>
    <name evidence="1" type="primary">htpX</name>
    <name type="ordered locus">Dtur_0907</name>
</gene>
<comment type="cofactor">
    <cofactor evidence="1">
        <name>Zn(2+)</name>
        <dbReference type="ChEBI" id="CHEBI:29105"/>
    </cofactor>
    <text evidence="1">Binds 1 zinc ion per subunit.</text>
</comment>
<comment type="subcellular location">
    <subcellularLocation>
        <location evidence="1">Cell inner membrane</location>
        <topology evidence="1">Multi-pass membrane protein</topology>
    </subcellularLocation>
</comment>
<comment type="similarity">
    <text evidence="1">Belongs to the peptidase M48B family.</text>
</comment>
<reference key="1">
    <citation type="journal article" date="2016" name="Front. Microbiol.">
        <title>The complete genome sequence of hyperthermophile Dictyoglomus turgidum DSM 6724 reveals a specialized carbohydrate fermentor.</title>
        <authorList>
            <person name="Brumm P.J."/>
            <person name="Gowda K."/>
            <person name="Robb F.T."/>
            <person name="Mead D.A."/>
        </authorList>
    </citation>
    <scope>NUCLEOTIDE SEQUENCE [LARGE SCALE GENOMIC DNA]</scope>
    <source>
        <strain>DSM 6724 / Z-1310</strain>
    </source>
</reference>
<keyword id="KW-0997">Cell inner membrane</keyword>
<keyword id="KW-1003">Cell membrane</keyword>
<keyword id="KW-0378">Hydrolase</keyword>
<keyword id="KW-0472">Membrane</keyword>
<keyword id="KW-0479">Metal-binding</keyword>
<keyword id="KW-0482">Metalloprotease</keyword>
<keyword id="KW-0645">Protease</keyword>
<keyword id="KW-1185">Reference proteome</keyword>
<keyword id="KW-0812">Transmembrane</keyword>
<keyword id="KW-1133">Transmembrane helix</keyword>
<keyword id="KW-0862">Zinc</keyword>
<dbReference type="EC" id="3.4.24.-" evidence="1"/>
<dbReference type="EMBL" id="CP001251">
    <property type="protein sequence ID" value="ACK42188.1"/>
    <property type="molecule type" value="Genomic_DNA"/>
</dbReference>
<dbReference type="RefSeq" id="WP_012583272.1">
    <property type="nucleotide sequence ID" value="NC_011661.1"/>
</dbReference>
<dbReference type="RefSeq" id="YP_002352802.1">
    <property type="nucleotide sequence ID" value="NC_011661.1"/>
</dbReference>
<dbReference type="SMR" id="B8E160"/>
<dbReference type="FunCoup" id="B8E160">
    <property type="interactions" value="155"/>
</dbReference>
<dbReference type="STRING" id="515635.Dtur_0907"/>
<dbReference type="EnsemblBacteria" id="ACK42188">
    <property type="protein sequence ID" value="ACK42188"/>
    <property type="gene ID" value="Dtur_0907"/>
</dbReference>
<dbReference type="KEGG" id="dtu:Dtur_0907"/>
<dbReference type="eggNOG" id="COG0501">
    <property type="taxonomic scope" value="Bacteria"/>
</dbReference>
<dbReference type="HOGENOM" id="CLU_042266_3_0_0"/>
<dbReference type="InParanoid" id="B8E160"/>
<dbReference type="OrthoDB" id="15218at2"/>
<dbReference type="Proteomes" id="UP000007719">
    <property type="component" value="Chromosome"/>
</dbReference>
<dbReference type="GO" id="GO:0005886">
    <property type="term" value="C:plasma membrane"/>
    <property type="evidence" value="ECO:0007669"/>
    <property type="project" value="UniProtKB-SubCell"/>
</dbReference>
<dbReference type="GO" id="GO:0004222">
    <property type="term" value="F:metalloendopeptidase activity"/>
    <property type="evidence" value="ECO:0007669"/>
    <property type="project" value="UniProtKB-UniRule"/>
</dbReference>
<dbReference type="GO" id="GO:0008270">
    <property type="term" value="F:zinc ion binding"/>
    <property type="evidence" value="ECO:0007669"/>
    <property type="project" value="UniProtKB-UniRule"/>
</dbReference>
<dbReference type="GO" id="GO:0006508">
    <property type="term" value="P:proteolysis"/>
    <property type="evidence" value="ECO:0007669"/>
    <property type="project" value="UniProtKB-KW"/>
</dbReference>
<dbReference type="CDD" id="cd07340">
    <property type="entry name" value="M48B_Htpx_like"/>
    <property type="match status" value="1"/>
</dbReference>
<dbReference type="Gene3D" id="3.30.2010.10">
    <property type="entry name" value="Metalloproteases ('zincins'), catalytic domain"/>
    <property type="match status" value="1"/>
</dbReference>
<dbReference type="HAMAP" id="MF_00188">
    <property type="entry name" value="Pept_M48_protease_HtpX"/>
    <property type="match status" value="1"/>
</dbReference>
<dbReference type="InterPro" id="IPR050083">
    <property type="entry name" value="HtpX_protease"/>
</dbReference>
<dbReference type="InterPro" id="IPR022919">
    <property type="entry name" value="Pept_M48_protease_HtpX"/>
</dbReference>
<dbReference type="InterPro" id="IPR001915">
    <property type="entry name" value="Peptidase_M48"/>
</dbReference>
<dbReference type="NCBIfam" id="NF003425">
    <property type="entry name" value="PRK04897.1"/>
    <property type="match status" value="1"/>
</dbReference>
<dbReference type="PANTHER" id="PTHR43221">
    <property type="entry name" value="PROTEASE HTPX"/>
    <property type="match status" value="1"/>
</dbReference>
<dbReference type="PANTHER" id="PTHR43221:SF1">
    <property type="entry name" value="PROTEASE HTPX"/>
    <property type="match status" value="1"/>
</dbReference>
<dbReference type="Pfam" id="PF01435">
    <property type="entry name" value="Peptidase_M48"/>
    <property type="match status" value="1"/>
</dbReference>
<proteinExistence type="inferred from homology"/>
<evidence type="ECO:0000255" key="1">
    <source>
        <dbReference type="HAMAP-Rule" id="MF_00188"/>
    </source>
</evidence>
<feature type="chain" id="PRO_1000203972" description="Protease HtpX homolog">
    <location>
        <begin position="1"/>
        <end position="304"/>
    </location>
</feature>
<feature type="transmembrane region" description="Helical" evidence="1">
    <location>
        <begin position="19"/>
        <end position="39"/>
    </location>
</feature>
<feature type="transmembrane region" description="Helical" evidence="1">
    <location>
        <begin position="41"/>
        <end position="61"/>
    </location>
</feature>
<feature type="transmembrane region" description="Helical" evidence="1">
    <location>
        <begin position="156"/>
        <end position="176"/>
    </location>
</feature>
<feature type="transmembrane region" description="Helical" evidence="1">
    <location>
        <begin position="192"/>
        <end position="212"/>
    </location>
</feature>
<feature type="active site" evidence="1">
    <location>
        <position position="147"/>
    </location>
</feature>
<feature type="binding site" evidence="1">
    <location>
        <position position="146"/>
    </location>
    <ligand>
        <name>Zn(2+)</name>
        <dbReference type="ChEBI" id="CHEBI:29105"/>
        <note>catalytic</note>
    </ligand>
</feature>
<feature type="binding site" evidence="1">
    <location>
        <position position="150"/>
    </location>
    <ligand>
        <name>Zn(2+)</name>
        <dbReference type="ChEBI" id="CHEBI:29105"/>
        <note>catalytic</note>
    </ligand>
</feature>
<feature type="binding site" evidence="1">
    <location>
        <position position="221"/>
    </location>
    <ligand>
        <name>Zn(2+)</name>
        <dbReference type="ChEBI" id="CHEBI:29105"/>
        <note>catalytic</note>
    </ligand>
</feature>
<sequence length="304" mass="34628">MKPFTFYEAIESNKRKTWFIVFIIYFLLFFVCYAVVSYFELGEIGIIIAFLIVLFTNYYAYQKSNEIILNYSGVREPTREEYPYLLNVVEGLSIAAGIPTPKIYIMDDPSPNAFATGKDPQNSVVVVTKGLLDILNRTELEGVIAHEISHIKNYDVRLQTIAAVMVGLIVILGDGLKRSFYYSKRRRDKDENILGIVSLIIAILAPFLATLLRFALSRQREYMADASAAMLTRYPEGLASALEKIAKNFQPIKRANVMTAPLYIVNPLSSNAVSKLFSTHPPIEERIRRLRMMGERWKMLDKEG</sequence>
<protein>
    <recommendedName>
        <fullName evidence="1">Protease HtpX homolog</fullName>
        <ecNumber evidence="1">3.4.24.-</ecNumber>
    </recommendedName>
</protein>